<keyword id="KW-0030">Aminoacyl-tRNA synthetase</keyword>
<keyword id="KW-0067">ATP-binding</keyword>
<keyword id="KW-0963">Cytoplasm</keyword>
<keyword id="KW-0436">Ligase</keyword>
<keyword id="KW-0547">Nucleotide-binding</keyword>
<keyword id="KW-0648">Protein biosynthesis</keyword>
<keyword id="KW-1185">Reference proteome</keyword>
<proteinExistence type="inferred from homology"/>
<protein>
    <recommendedName>
        <fullName evidence="1">Serine--tRNA ligase</fullName>
        <ecNumber evidence="1">6.1.1.11</ecNumber>
    </recommendedName>
    <alternativeName>
        <fullName evidence="1">Seryl-tRNA synthetase</fullName>
        <shortName evidence="1">SerRS</shortName>
    </alternativeName>
    <alternativeName>
        <fullName evidence="1">Seryl-tRNA(Ser/Sec) synthetase</fullName>
    </alternativeName>
</protein>
<comment type="function">
    <text evidence="1">Catalyzes the attachment of serine to tRNA(Ser). Is also able to aminoacylate tRNA(Sec) with serine, to form the misacylated tRNA L-seryl-tRNA(Sec), which will be further converted into selenocysteinyl-tRNA(Sec).</text>
</comment>
<comment type="catalytic activity">
    <reaction evidence="1">
        <text>tRNA(Ser) + L-serine + ATP = L-seryl-tRNA(Ser) + AMP + diphosphate + H(+)</text>
        <dbReference type="Rhea" id="RHEA:12292"/>
        <dbReference type="Rhea" id="RHEA-COMP:9669"/>
        <dbReference type="Rhea" id="RHEA-COMP:9703"/>
        <dbReference type="ChEBI" id="CHEBI:15378"/>
        <dbReference type="ChEBI" id="CHEBI:30616"/>
        <dbReference type="ChEBI" id="CHEBI:33019"/>
        <dbReference type="ChEBI" id="CHEBI:33384"/>
        <dbReference type="ChEBI" id="CHEBI:78442"/>
        <dbReference type="ChEBI" id="CHEBI:78533"/>
        <dbReference type="ChEBI" id="CHEBI:456215"/>
        <dbReference type="EC" id="6.1.1.11"/>
    </reaction>
</comment>
<comment type="catalytic activity">
    <reaction evidence="1">
        <text>tRNA(Sec) + L-serine + ATP = L-seryl-tRNA(Sec) + AMP + diphosphate + H(+)</text>
        <dbReference type="Rhea" id="RHEA:42580"/>
        <dbReference type="Rhea" id="RHEA-COMP:9742"/>
        <dbReference type="Rhea" id="RHEA-COMP:10128"/>
        <dbReference type="ChEBI" id="CHEBI:15378"/>
        <dbReference type="ChEBI" id="CHEBI:30616"/>
        <dbReference type="ChEBI" id="CHEBI:33019"/>
        <dbReference type="ChEBI" id="CHEBI:33384"/>
        <dbReference type="ChEBI" id="CHEBI:78442"/>
        <dbReference type="ChEBI" id="CHEBI:78533"/>
        <dbReference type="ChEBI" id="CHEBI:456215"/>
        <dbReference type="EC" id="6.1.1.11"/>
    </reaction>
</comment>
<comment type="pathway">
    <text evidence="1">Aminoacyl-tRNA biosynthesis; selenocysteinyl-tRNA(Sec) biosynthesis; L-seryl-tRNA(Sec) from L-serine and tRNA(Sec): step 1/1.</text>
</comment>
<comment type="subunit">
    <text evidence="1">Homodimer. The tRNA molecule binds across the dimer.</text>
</comment>
<comment type="subcellular location">
    <subcellularLocation>
        <location evidence="1">Cytoplasm</location>
    </subcellularLocation>
</comment>
<comment type="domain">
    <text evidence="1">Consists of two distinct domains, a catalytic core and a N-terminal extension that is involved in tRNA binding.</text>
</comment>
<comment type="similarity">
    <text evidence="1">Belongs to the class-II aminoacyl-tRNA synthetase family. Type-1 seryl-tRNA synthetase subfamily.</text>
</comment>
<accession>O33780</accession>
<accession>Q9UWZ6</accession>
<gene>
    <name evidence="1" type="primary">serS</name>
    <name type="ordered locus">SSO0602</name>
    <name type="ORF">C08_048</name>
</gene>
<name>SYS_SACS2</name>
<organism>
    <name type="scientific">Saccharolobus solfataricus (strain ATCC 35092 / DSM 1617 / JCM 11322 / P2)</name>
    <name type="common">Sulfolobus solfataricus</name>
    <dbReference type="NCBI Taxonomy" id="273057"/>
    <lineage>
        <taxon>Archaea</taxon>
        <taxon>Thermoproteota</taxon>
        <taxon>Thermoprotei</taxon>
        <taxon>Sulfolobales</taxon>
        <taxon>Sulfolobaceae</taxon>
        <taxon>Saccharolobus</taxon>
    </lineage>
</organism>
<feature type="chain" id="PRO_0000122185" description="Serine--tRNA ligase">
    <location>
        <begin position="1"/>
        <end position="457"/>
    </location>
</feature>
<feature type="binding site" evidence="1">
    <location>
        <begin position="252"/>
        <end position="254"/>
    </location>
    <ligand>
        <name>L-serine</name>
        <dbReference type="ChEBI" id="CHEBI:33384"/>
    </ligand>
</feature>
<feature type="binding site" evidence="1">
    <location>
        <begin position="283"/>
        <end position="285"/>
    </location>
    <ligand>
        <name>ATP</name>
        <dbReference type="ChEBI" id="CHEBI:30616"/>
    </ligand>
</feature>
<feature type="binding site" evidence="1">
    <location>
        <position position="299"/>
    </location>
    <ligand>
        <name>ATP</name>
        <dbReference type="ChEBI" id="CHEBI:30616"/>
    </ligand>
</feature>
<feature type="binding site" evidence="1">
    <location>
        <position position="306"/>
    </location>
    <ligand>
        <name>L-serine</name>
        <dbReference type="ChEBI" id="CHEBI:33384"/>
    </ligand>
</feature>
<feature type="binding site" evidence="1">
    <location>
        <begin position="370"/>
        <end position="373"/>
    </location>
    <ligand>
        <name>ATP</name>
        <dbReference type="ChEBI" id="CHEBI:30616"/>
    </ligand>
</feature>
<feature type="binding site" evidence="1">
    <location>
        <position position="406"/>
    </location>
    <ligand>
        <name>L-serine</name>
        <dbReference type="ChEBI" id="CHEBI:33384"/>
    </ligand>
</feature>
<dbReference type="EC" id="6.1.1.11" evidence="1"/>
<dbReference type="EMBL" id="Y18930">
    <property type="protein sequence ID" value="CAB57698.1"/>
    <property type="molecule type" value="Genomic_DNA"/>
</dbReference>
<dbReference type="EMBL" id="AE006641">
    <property type="protein sequence ID" value="AAK40914.1"/>
    <property type="molecule type" value="Genomic_DNA"/>
</dbReference>
<dbReference type="EMBL" id="U82227">
    <property type="protein sequence ID" value="AAB63028.1"/>
    <property type="molecule type" value="Genomic_DNA"/>
</dbReference>
<dbReference type="PIR" id="C90207">
    <property type="entry name" value="C90207"/>
</dbReference>
<dbReference type="RefSeq" id="WP_009991125.1">
    <property type="nucleotide sequence ID" value="NC_002754.1"/>
</dbReference>
<dbReference type="SMR" id="O33780"/>
<dbReference type="FunCoup" id="O33780">
    <property type="interactions" value="297"/>
</dbReference>
<dbReference type="STRING" id="273057.SSO0602"/>
<dbReference type="PaxDb" id="273057-SSO0602"/>
<dbReference type="EnsemblBacteria" id="AAK40914">
    <property type="protein sequence ID" value="AAK40914"/>
    <property type="gene ID" value="SSO0602"/>
</dbReference>
<dbReference type="GeneID" id="44129604"/>
<dbReference type="KEGG" id="sso:SSO0602"/>
<dbReference type="PATRIC" id="fig|273057.12.peg.610"/>
<dbReference type="eggNOG" id="arCOG00403">
    <property type="taxonomic scope" value="Archaea"/>
</dbReference>
<dbReference type="HOGENOM" id="CLU_023797_0_1_2"/>
<dbReference type="InParanoid" id="O33780"/>
<dbReference type="PhylomeDB" id="O33780"/>
<dbReference type="UniPathway" id="UPA00906">
    <property type="reaction ID" value="UER00895"/>
</dbReference>
<dbReference type="Proteomes" id="UP000001974">
    <property type="component" value="Chromosome"/>
</dbReference>
<dbReference type="GO" id="GO:0005829">
    <property type="term" value="C:cytosol"/>
    <property type="evidence" value="ECO:0000318"/>
    <property type="project" value="GO_Central"/>
</dbReference>
<dbReference type="GO" id="GO:0005524">
    <property type="term" value="F:ATP binding"/>
    <property type="evidence" value="ECO:0007669"/>
    <property type="project" value="UniProtKB-UniRule"/>
</dbReference>
<dbReference type="GO" id="GO:0004828">
    <property type="term" value="F:serine-tRNA ligase activity"/>
    <property type="evidence" value="ECO:0000318"/>
    <property type="project" value="GO_Central"/>
</dbReference>
<dbReference type="GO" id="GO:0000049">
    <property type="term" value="F:tRNA binding"/>
    <property type="evidence" value="ECO:0000318"/>
    <property type="project" value="GO_Central"/>
</dbReference>
<dbReference type="GO" id="GO:0016260">
    <property type="term" value="P:selenocysteine biosynthetic process"/>
    <property type="evidence" value="ECO:0007669"/>
    <property type="project" value="UniProtKB-UniRule"/>
</dbReference>
<dbReference type="GO" id="GO:0006434">
    <property type="term" value="P:seryl-tRNA aminoacylation"/>
    <property type="evidence" value="ECO:0000318"/>
    <property type="project" value="GO_Central"/>
</dbReference>
<dbReference type="CDD" id="cd00770">
    <property type="entry name" value="SerRS_core"/>
    <property type="match status" value="1"/>
</dbReference>
<dbReference type="FunFam" id="1.10.287.40:FF:000004">
    <property type="entry name" value="Serine--tRNA ligase"/>
    <property type="match status" value="1"/>
</dbReference>
<dbReference type="FunFam" id="3.30.930.10:FF:000048">
    <property type="entry name" value="Serine--tRNA ligase"/>
    <property type="match status" value="1"/>
</dbReference>
<dbReference type="Gene3D" id="3.30.930.10">
    <property type="entry name" value="Bira Bifunctional Protein, Domain 2"/>
    <property type="match status" value="1"/>
</dbReference>
<dbReference type="Gene3D" id="1.10.287.40">
    <property type="entry name" value="Serine-tRNA synthetase, tRNA binding domain"/>
    <property type="match status" value="1"/>
</dbReference>
<dbReference type="HAMAP" id="MF_00176">
    <property type="entry name" value="Ser_tRNA_synth_type1"/>
    <property type="match status" value="1"/>
</dbReference>
<dbReference type="InterPro" id="IPR002314">
    <property type="entry name" value="aa-tRNA-synt_IIb"/>
</dbReference>
<dbReference type="InterPro" id="IPR006195">
    <property type="entry name" value="aa-tRNA-synth_II"/>
</dbReference>
<dbReference type="InterPro" id="IPR045864">
    <property type="entry name" value="aa-tRNA-synth_II/BPL/LPL"/>
</dbReference>
<dbReference type="InterPro" id="IPR002317">
    <property type="entry name" value="Ser-tRNA-ligase_type_1"/>
</dbReference>
<dbReference type="InterPro" id="IPR015866">
    <property type="entry name" value="Ser-tRNA-synth_1_N"/>
</dbReference>
<dbReference type="InterPro" id="IPR042103">
    <property type="entry name" value="SerRS_1_N_sf"/>
</dbReference>
<dbReference type="InterPro" id="IPR033729">
    <property type="entry name" value="SerRS_core"/>
</dbReference>
<dbReference type="InterPro" id="IPR010978">
    <property type="entry name" value="tRNA-bd_arm"/>
</dbReference>
<dbReference type="NCBIfam" id="TIGR00414">
    <property type="entry name" value="serS"/>
    <property type="match status" value="1"/>
</dbReference>
<dbReference type="PANTHER" id="PTHR11778">
    <property type="entry name" value="SERYL-TRNA SYNTHETASE"/>
    <property type="match status" value="1"/>
</dbReference>
<dbReference type="Pfam" id="PF02403">
    <property type="entry name" value="Seryl_tRNA_N"/>
    <property type="match status" value="1"/>
</dbReference>
<dbReference type="Pfam" id="PF00587">
    <property type="entry name" value="tRNA-synt_2b"/>
    <property type="match status" value="1"/>
</dbReference>
<dbReference type="PIRSF" id="PIRSF001529">
    <property type="entry name" value="Ser-tRNA-synth_IIa"/>
    <property type="match status" value="1"/>
</dbReference>
<dbReference type="PRINTS" id="PR00981">
    <property type="entry name" value="TRNASYNTHSER"/>
</dbReference>
<dbReference type="SUPFAM" id="SSF55681">
    <property type="entry name" value="Class II aaRS and biotin synthetases"/>
    <property type="match status" value="1"/>
</dbReference>
<dbReference type="SUPFAM" id="SSF46589">
    <property type="entry name" value="tRNA-binding arm"/>
    <property type="match status" value="1"/>
</dbReference>
<dbReference type="PROSITE" id="PS50862">
    <property type="entry name" value="AA_TRNA_LIGASE_II"/>
    <property type="match status" value="1"/>
</dbReference>
<evidence type="ECO:0000255" key="1">
    <source>
        <dbReference type="HAMAP-Rule" id="MF_00176"/>
    </source>
</evidence>
<reference key="1">
    <citation type="journal article" date="2000" name="Genome">
        <title>Gene content and organization of a 281-kbp contig from the genome of the extremely thermophilic archaeon, Sulfolobus solfataricus P2.</title>
        <authorList>
            <person name="Charlebois R.L."/>
            <person name="Singh R.K."/>
            <person name="Chan-Weiher C.C.-Y."/>
            <person name="Allard G."/>
            <person name="Chow C."/>
            <person name="Confalonieri F."/>
            <person name="Curtis B."/>
            <person name="Duguet M."/>
            <person name="Erauso G."/>
            <person name="Faguy D."/>
            <person name="Gaasterland T."/>
            <person name="Garrett R.A."/>
            <person name="Gordon P."/>
            <person name="Jeffries A.C."/>
            <person name="Kozera C."/>
            <person name="Kushwaha N."/>
            <person name="Lafleur E."/>
            <person name="Medina N."/>
            <person name="Peng X."/>
            <person name="Penny S.L."/>
            <person name="She Q."/>
            <person name="St Jean A."/>
            <person name="van der Oost J."/>
            <person name="Young F."/>
            <person name="Zivanovic Y."/>
            <person name="Doolittle W.F."/>
            <person name="Ragan M.A."/>
            <person name="Sensen C.W."/>
        </authorList>
    </citation>
    <scope>NUCLEOTIDE SEQUENCE [LARGE SCALE GENOMIC DNA]</scope>
    <source>
        <strain>ATCC 35092 / DSM 1617 / JCM 11322 / P2</strain>
    </source>
</reference>
<reference key="2">
    <citation type="journal article" date="2001" name="Proc. Natl. Acad. Sci. U.S.A.">
        <title>The complete genome of the crenarchaeon Sulfolobus solfataricus P2.</title>
        <authorList>
            <person name="She Q."/>
            <person name="Singh R.K."/>
            <person name="Confalonieri F."/>
            <person name="Zivanovic Y."/>
            <person name="Allard G."/>
            <person name="Awayez M.J."/>
            <person name="Chan-Weiher C.C.-Y."/>
            <person name="Clausen I.G."/>
            <person name="Curtis B.A."/>
            <person name="De Moors A."/>
            <person name="Erauso G."/>
            <person name="Fletcher C."/>
            <person name="Gordon P.M.K."/>
            <person name="Heikamp-de Jong I."/>
            <person name="Jeffries A.C."/>
            <person name="Kozera C.J."/>
            <person name="Medina N."/>
            <person name="Peng X."/>
            <person name="Thi-Ngoc H.P."/>
            <person name="Redder P."/>
            <person name="Schenk M.E."/>
            <person name="Theriault C."/>
            <person name="Tolstrup N."/>
            <person name="Charlebois R.L."/>
            <person name="Doolittle W.F."/>
            <person name="Duguet M."/>
            <person name="Gaasterland T."/>
            <person name="Garrett R.A."/>
            <person name="Ragan M.A."/>
            <person name="Sensen C.W."/>
            <person name="Van der Oost J."/>
        </authorList>
    </citation>
    <scope>NUCLEOTIDE SEQUENCE [LARGE SCALE GENOMIC DNA]</scope>
    <source>
        <strain>ATCC 35092 / DSM 1617 / JCM 11322 / P2</strain>
    </source>
</reference>
<reference key="3">
    <citation type="journal article" date="1997" name="J. Bacteriol.">
        <title>Evolutionary analysis of the hisCGABdFDEHI gene cluster from the archaeon Sulfolobus solfataricus P2.</title>
        <authorList>
            <person name="Charlebois R.L."/>
            <person name="Sensen C.W."/>
            <person name="Doolittle W.F."/>
            <person name="Brown J.R."/>
        </authorList>
    </citation>
    <scope>NUCLEOTIDE SEQUENCE [GENOMIC DNA] OF 1-100</scope>
    <source>
        <strain>ATCC 35092 / DSM 1617 / JCM 11322 / P2</strain>
    </source>
</reference>
<sequence>MSWSILELLRKNPEDLKNNLKRRAIDVSLVDKAVELDKKWRQVLQEVEKLRHQHNVLSSQISKLSGEERKKKIEESKNLLKILEEKEKELEEIENERDRLLSSLPNLVADDVPNGPDDSYNVPIKFWGKFKVYEGDVQEFLKQIKDAKVNYEVIKWKPKGHAEMLEDVLHLGNTLKAAEIAGSRFYYLFNDIVWLDFSLLLFAIDYITQQGYTLVLPPYMLRGEVIQSVIDLDTFKDAIYKIENEDLYLIATAEHPIAAMFFKEEIEKDKLPLKFAGISPAFRKEASAANKDLKGIFRVHQFHKVEQFIFSTPEDSWKYHSELITNAESIFQQLELPYRIVNIASGDLGACAAKKFDLEVWMPAQAKFREMVSCSNCTDWQAFRMKIRYVDRKNNRRGYVHTLNSTAIASTRTITAILENYQREDGVVEVPKVLRKYLEAFPKAPKDYIYPLKNKII</sequence>